<dbReference type="EC" id="2.4.1.21" evidence="1"/>
<dbReference type="EMBL" id="CP001120">
    <property type="protein sequence ID" value="ACF67163.1"/>
    <property type="molecule type" value="Genomic_DNA"/>
</dbReference>
<dbReference type="RefSeq" id="WP_001197669.1">
    <property type="nucleotide sequence ID" value="NC_011083.1"/>
</dbReference>
<dbReference type="SMR" id="B4T867"/>
<dbReference type="CAZy" id="GT5">
    <property type="family name" value="Glycosyltransferase Family 5"/>
</dbReference>
<dbReference type="KEGG" id="seh:SeHA_C3844"/>
<dbReference type="HOGENOM" id="CLU_009583_18_4_6"/>
<dbReference type="UniPathway" id="UPA00164"/>
<dbReference type="Proteomes" id="UP000001866">
    <property type="component" value="Chromosome"/>
</dbReference>
<dbReference type="GO" id="GO:0005829">
    <property type="term" value="C:cytosol"/>
    <property type="evidence" value="ECO:0007669"/>
    <property type="project" value="TreeGrafter"/>
</dbReference>
<dbReference type="GO" id="GO:0009011">
    <property type="term" value="F:alpha-1,4-glucan glucosyltransferase (ADP-glucose donor) activity"/>
    <property type="evidence" value="ECO:0007669"/>
    <property type="project" value="UniProtKB-UniRule"/>
</dbReference>
<dbReference type="GO" id="GO:0004373">
    <property type="term" value="F:alpha-1,4-glucan glucosyltransferase (UDP-glucose donor) activity"/>
    <property type="evidence" value="ECO:0007669"/>
    <property type="project" value="InterPro"/>
</dbReference>
<dbReference type="GO" id="GO:0005978">
    <property type="term" value="P:glycogen biosynthetic process"/>
    <property type="evidence" value="ECO:0007669"/>
    <property type="project" value="UniProtKB-UniRule"/>
</dbReference>
<dbReference type="CDD" id="cd03791">
    <property type="entry name" value="GT5_Glycogen_synthase_DULL1-like"/>
    <property type="match status" value="1"/>
</dbReference>
<dbReference type="FunFam" id="3.40.50.2000:FF:000008">
    <property type="entry name" value="Glycogen synthase"/>
    <property type="match status" value="1"/>
</dbReference>
<dbReference type="FunFam" id="3.40.50.2000:FF:000011">
    <property type="entry name" value="Glycogen synthase"/>
    <property type="match status" value="1"/>
</dbReference>
<dbReference type="Gene3D" id="3.40.50.2000">
    <property type="entry name" value="Glycogen Phosphorylase B"/>
    <property type="match status" value="2"/>
</dbReference>
<dbReference type="HAMAP" id="MF_00484">
    <property type="entry name" value="Glycogen_synth"/>
    <property type="match status" value="1"/>
</dbReference>
<dbReference type="InterPro" id="IPR001296">
    <property type="entry name" value="Glyco_trans_1"/>
</dbReference>
<dbReference type="InterPro" id="IPR011835">
    <property type="entry name" value="GS/SS"/>
</dbReference>
<dbReference type="InterPro" id="IPR013534">
    <property type="entry name" value="Starch_synth_cat_dom"/>
</dbReference>
<dbReference type="NCBIfam" id="TIGR02095">
    <property type="entry name" value="glgA"/>
    <property type="match status" value="1"/>
</dbReference>
<dbReference type="NCBIfam" id="NF001899">
    <property type="entry name" value="PRK00654.1-2"/>
    <property type="match status" value="1"/>
</dbReference>
<dbReference type="PANTHER" id="PTHR45825:SF11">
    <property type="entry name" value="ALPHA AMYLASE DOMAIN-CONTAINING PROTEIN"/>
    <property type="match status" value="1"/>
</dbReference>
<dbReference type="PANTHER" id="PTHR45825">
    <property type="entry name" value="GRANULE-BOUND STARCH SYNTHASE 1, CHLOROPLASTIC/AMYLOPLASTIC"/>
    <property type="match status" value="1"/>
</dbReference>
<dbReference type="Pfam" id="PF08323">
    <property type="entry name" value="Glyco_transf_5"/>
    <property type="match status" value="1"/>
</dbReference>
<dbReference type="Pfam" id="PF00534">
    <property type="entry name" value="Glycos_transf_1"/>
    <property type="match status" value="1"/>
</dbReference>
<dbReference type="SUPFAM" id="SSF53756">
    <property type="entry name" value="UDP-Glycosyltransferase/glycogen phosphorylase"/>
    <property type="match status" value="1"/>
</dbReference>
<feature type="chain" id="PRO_1000126099" description="Glycogen synthase">
    <location>
        <begin position="1"/>
        <end position="477"/>
    </location>
</feature>
<feature type="binding site" evidence="1">
    <location>
        <position position="15"/>
    </location>
    <ligand>
        <name>ADP-alpha-D-glucose</name>
        <dbReference type="ChEBI" id="CHEBI:57498"/>
    </ligand>
</feature>
<keyword id="KW-0320">Glycogen biosynthesis</keyword>
<keyword id="KW-0328">Glycosyltransferase</keyword>
<keyword id="KW-0808">Transferase</keyword>
<reference key="1">
    <citation type="journal article" date="2011" name="J. Bacteriol.">
        <title>Comparative genomics of 28 Salmonella enterica isolates: evidence for CRISPR-mediated adaptive sublineage evolution.</title>
        <authorList>
            <person name="Fricke W.F."/>
            <person name="Mammel M.K."/>
            <person name="McDermott P.F."/>
            <person name="Tartera C."/>
            <person name="White D.G."/>
            <person name="Leclerc J.E."/>
            <person name="Ravel J."/>
            <person name="Cebula T.A."/>
        </authorList>
    </citation>
    <scope>NUCLEOTIDE SEQUENCE [LARGE SCALE GENOMIC DNA]</scope>
    <source>
        <strain>SL476</strain>
    </source>
</reference>
<protein>
    <recommendedName>
        <fullName evidence="1">Glycogen synthase</fullName>
        <ecNumber evidence="1">2.4.1.21</ecNumber>
    </recommendedName>
    <alternativeName>
        <fullName evidence="1">Starch [bacterial glycogen] synthase</fullName>
    </alternativeName>
</protein>
<proteinExistence type="inferred from homology"/>
<comment type="function">
    <text evidence="1">Synthesizes alpha-1,4-glucan chains using ADP-glucose.</text>
</comment>
<comment type="catalytic activity">
    <reaction evidence="1">
        <text>[(1-&gt;4)-alpha-D-glucosyl](n) + ADP-alpha-D-glucose = [(1-&gt;4)-alpha-D-glucosyl](n+1) + ADP + H(+)</text>
        <dbReference type="Rhea" id="RHEA:18189"/>
        <dbReference type="Rhea" id="RHEA-COMP:9584"/>
        <dbReference type="Rhea" id="RHEA-COMP:9587"/>
        <dbReference type="ChEBI" id="CHEBI:15378"/>
        <dbReference type="ChEBI" id="CHEBI:15444"/>
        <dbReference type="ChEBI" id="CHEBI:57498"/>
        <dbReference type="ChEBI" id="CHEBI:456216"/>
        <dbReference type="EC" id="2.4.1.21"/>
    </reaction>
</comment>
<comment type="pathway">
    <text evidence="1">Glycan biosynthesis; glycogen biosynthesis.</text>
</comment>
<comment type="similarity">
    <text evidence="1">Belongs to the glycosyltransferase 1 family. Bacterial/plant glycogen synthase subfamily.</text>
</comment>
<evidence type="ECO:0000255" key="1">
    <source>
        <dbReference type="HAMAP-Rule" id="MF_00484"/>
    </source>
</evidence>
<sequence>MQVLHVCSEMFPLLKTGGLADVIGALPAAQIADGVDVRVLLPGFPDIRRGIPDAHVVSRRDTFAGKISLLFGHYNGVGIYLIDAPHLYERPGSPYHDTNLYAYTDNVLRFALLGWVGCEMACGLDPFWRPDVVHAHDWHAGLAPAYLAARGRPAKSVFTVHNLAYQGMFYAKHMDDIELPWSFFNMHGLEFNGQLSFLKAGLYYADHITAVSPTYAREITEPQFAYGMEGLLRQRHLEGRLSGILNGVDEKIWNPESDLLLASRYTRDTLEEKAENKRQLQIAMGLKVNDKVPLFAVVSRLTNQKGLDLVLEALPGLLEQGGQLALLGAGDPVLQEGFLAAAAEHPGQVGVQIGYHEAFSHRIMGGADVILVPSRFEPCGLTQLYGLKYGTLPLVRRTGGLADTVSDSSLENLADGIASGFVFEDSNAWSLLRAIRRAFVLWSRPSLWRFVQRQAMAMDFSWQVAAKSYRELYYRLK</sequence>
<accession>B4T867</accession>
<name>GLGA_SALHS</name>
<organism>
    <name type="scientific">Salmonella heidelberg (strain SL476)</name>
    <dbReference type="NCBI Taxonomy" id="454169"/>
    <lineage>
        <taxon>Bacteria</taxon>
        <taxon>Pseudomonadati</taxon>
        <taxon>Pseudomonadota</taxon>
        <taxon>Gammaproteobacteria</taxon>
        <taxon>Enterobacterales</taxon>
        <taxon>Enterobacteriaceae</taxon>
        <taxon>Salmonella</taxon>
    </lineage>
</organism>
<gene>
    <name evidence="1" type="primary">glgA</name>
    <name type="ordered locus">SeHA_C3844</name>
</gene>